<protein>
    <recommendedName>
        <fullName evidence="1">FMN-dependent NADH:quinone oxidoreductase</fullName>
        <ecNumber evidence="1">1.6.5.-</ecNumber>
    </recommendedName>
    <alternativeName>
        <fullName evidence="1">Azo-dye reductase</fullName>
    </alternativeName>
    <alternativeName>
        <fullName evidence="1">FMN-dependent NADH-azo compound oxidoreductase</fullName>
    </alternativeName>
    <alternativeName>
        <fullName evidence="1">FMN-dependent NADH-azoreductase</fullName>
        <ecNumber evidence="1">1.7.1.17</ecNumber>
    </alternativeName>
</protein>
<evidence type="ECO:0000255" key="1">
    <source>
        <dbReference type="HAMAP-Rule" id="MF_01216"/>
    </source>
</evidence>
<sequence>MSKVLVLKSSILATYSQSNQLADFFVEQWKTAHAGDEITVRDLAAQPIPVLDGELVGALRPSDAALTPRQQEALALSDELIAELQANDVIVMAAPMYNFNIPTQLKNYFDLIARAGVTFRYTEKGPEGLITGKRAIILTSRGGIHKDTPTDLVVPYLRLFLGFIGITDVKFVFAEGIAYGPEVATKAQADAKELLTQVVSA</sequence>
<comment type="function">
    <text evidence="1">Quinone reductase that provides resistance to thiol-specific stress caused by electrophilic quinones.</text>
</comment>
<comment type="function">
    <text evidence="1">Also exhibits azoreductase activity. Catalyzes the reductive cleavage of the azo bond in aromatic azo compounds to the corresponding amines.</text>
</comment>
<comment type="catalytic activity">
    <reaction evidence="1">
        <text>2 a quinone + NADH + H(+) = 2 a 1,4-benzosemiquinone + NAD(+)</text>
        <dbReference type="Rhea" id="RHEA:65952"/>
        <dbReference type="ChEBI" id="CHEBI:15378"/>
        <dbReference type="ChEBI" id="CHEBI:57540"/>
        <dbReference type="ChEBI" id="CHEBI:57945"/>
        <dbReference type="ChEBI" id="CHEBI:132124"/>
        <dbReference type="ChEBI" id="CHEBI:134225"/>
    </reaction>
</comment>
<comment type="catalytic activity">
    <reaction evidence="1">
        <text>N,N-dimethyl-1,4-phenylenediamine + anthranilate + 2 NAD(+) = 2-(4-dimethylaminophenyl)diazenylbenzoate + 2 NADH + 2 H(+)</text>
        <dbReference type="Rhea" id="RHEA:55872"/>
        <dbReference type="ChEBI" id="CHEBI:15378"/>
        <dbReference type="ChEBI" id="CHEBI:15783"/>
        <dbReference type="ChEBI" id="CHEBI:16567"/>
        <dbReference type="ChEBI" id="CHEBI:57540"/>
        <dbReference type="ChEBI" id="CHEBI:57945"/>
        <dbReference type="ChEBI" id="CHEBI:71579"/>
        <dbReference type="EC" id="1.7.1.17"/>
    </reaction>
</comment>
<comment type="cofactor">
    <cofactor evidence="1">
        <name>FMN</name>
        <dbReference type="ChEBI" id="CHEBI:58210"/>
    </cofactor>
    <text evidence="1">Binds 1 FMN per subunit.</text>
</comment>
<comment type="subunit">
    <text evidence="1">Homodimer.</text>
</comment>
<comment type="similarity">
    <text evidence="1">Belongs to the azoreductase type 1 family.</text>
</comment>
<proteinExistence type="inferred from homology"/>
<organism>
    <name type="scientific">Yersinia enterocolitica serotype O:8 / biotype 1B (strain NCTC 13174 / 8081)</name>
    <dbReference type="NCBI Taxonomy" id="393305"/>
    <lineage>
        <taxon>Bacteria</taxon>
        <taxon>Pseudomonadati</taxon>
        <taxon>Pseudomonadota</taxon>
        <taxon>Gammaproteobacteria</taxon>
        <taxon>Enterobacterales</taxon>
        <taxon>Yersiniaceae</taxon>
        <taxon>Yersinia</taxon>
    </lineage>
</organism>
<feature type="chain" id="PRO_1000066534" description="FMN-dependent NADH:quinone oxidoreductase">
    <location>
        <begin position="1"/>
        <end position="201"/>
    </location>
</feature>
<feature type="binding site" evidence="1">
    <location>
        <position position="10"/>
    </location>
    <ligand>
        <name>FMN</name>
        <dbReference type="ChEBI" id="CHEBI:58210"/>
    </ligand>
</feature>
<feature type="binding site" evidence="1">
    <location>
        <begin position="16"/>
        <end position="18"/>
    </location>
    <ligand>
        <name>FMN</name>
        <dbReference type="ChEBI" id="CHEBI:58210"/>
    </ligand>
</feature>
<feature type="binding site" evidence="1">
    <location>
        <begin position="96"/>
        <end position="99"/>
    </location>
    <ligand>
        <name>FMN</name>
        <dbReference type="ChEBI" id="CHEBI:58210"/>
    </ligand>
</feature>
<feature type="binding site" evidence="1">
    <location>
        <begin position="140"/>
        <end position="143"/>
    </location>
    <ligand>
        <name>FMN</name>
        <dbReference type="ChEBI" id="CHEBI:58210"/>
    </ligand>
</feature>
<keyword id="KW-0285">Flavoprotein</keyword>
<keyword id="KW-0288">FMN</keyword>
<keyword id="KW-0520">NAD</keyword>
<keyword id="KW-0560">Oxidoreductase</keyword>
<dbReference type="EC" id="1.6.5.-" evidence="1"/>
<dbReference type="EC" id="1.7.1.17" evidence="1"/>
<dbReference type="EMBL" id="AM286415">
    <property type="protein sequence ID" value="CAL12165.1"/>
    <property type="molecule type" value="Genomic_DNA"/>
</dbReference>
<dbReference type="RefSeq" id="WP_011816349.1">
    <property type="nucleotide sequence ID" value="NC_008800.1"/>
</dbReference>
<dbReference type="RefSeq" id="YP_001006336.1">
    <property type="nucleotide sequence ID" value="NC_008800.1"/>
</dbReference>
<dbReference type="SMR" id="A1JN84"/>
<dbReference type="KEGG" id="yen:YE2092"/>
<dbReference type="PATRIC" id="fig|393305.7.peg.2256"/>
<dbReference type="eggNOG" id="COG1182">
    <property type="taxonomic scope" value="Bacteria"/>
</dbReference>
<dbReference type="HOGENOM" id="CLU_088964_0_0_6"/>
<dbReference type="OrthoDB" id="9787136at2"/>
<dbReference type="Proteomes" id="UP000000642">
    <property type="component" value="Chromosome"/>
</dbReference>
<dbReference type="GO" id="GO:0009055">
    <property type="term" value="F:electron transfer activity"/>
    <property type="evidence" value="ECO:0007669"/>
    <property type="project" value="UniProtKB-UniRule"/>
</dbReference>
<dbReference type="GO" id="GO:0010181">
    <property type="term" value="F:FMN binding"/>
    <property type="evidence" value="ECO:0007669"/>
    <property type="project" value="UniProtKB-UniRule"/>
</dbReference>
<dbReference type="GO" id="GO:0016652">
    <property type="term" value="F:oxidoreductase activity, acting on NAD(P)H as acceptor"/>
    <property type="evidence" value="ECO:0007669"/>
    <property type="project" value="UniProtKB-UniRule"/>
</dbReference>
<dbReference type="GO" id="GO:0016655">
    <property type="term" value="F:oxidoreductase activity, acting on NAD(P)H, quinone or similar compound as acceptor"/>
    <property type="evidence" value="ECO:0007669"/>
    <property type="project" value="InterPro"/>
</dbReference>
<dbReference type="FunFam" id="3.40.50.360:FF:000010">
    <property type="entry name" value="FMN-dependent NADH-azoreductase"/>
    <property type="match status" value="1"/>
</dbReference>
<dbReference type="Gene3D" id="3.40.50.360">
    <property type="match status" value="1"/>
</dbReference>
<dbReference type="HAMAP" id="MF_01216">
    <property type="entry name" value="Azoreductase_type1"/>
    <property type="match status" value="1"/>
</dbReference>
<dbReference type="InterPro" id="IPR003680">
    <property type="entry name" value="Flavodoxin_fold"/>
</dbReference>
<dbReference type="InterPro" id="IPR029039">
    <property type="entry name" value="Flavoprotein-like_sf"/>
</dbReference>
<dbReference type="InterPro" id="IPR050104">
    <property type="entry name" value="FMN-dep_NADH:Q_OxRdtase_AzoR1"/>
</dbReference>
<dbReference type="InterPro" id="IPR023048">
    <property type="entry name" value="NADH:quinone_OxRdtase_FMN_depd"/>
</dbReference>
<dbReference type="PANTHER" id="PTHR43741">
    <property type="entry name" value="FMN-DEPENDENT NADH-AZOREDUCTASE 1"/>
    <property type="match status" value="1"/>
</dbReference>
<dbReference type="PANTHER" id="PTHR43741:SF2">
    <property type="entry name" value="FMN-DEPENDENT NADH:QUINONE OXIDOREDUCTASE"/>
    <property type="match status" value="1"/>
</dbReference>
<dbReference type="Pfam" id="PF02525">
    <property type="entry name" value="Flavodoxin_2"/>
    <property type="match status" value="1"/>
</dbReference>
<dbReference type="SUPFAM" id="SSF52218">
    <property type="entry name" value="Flavoproteins"/>
    <property type="match status" value="1"/>
</dbReference>
<name>AZOR_YERE8</name>
<reference key="1">
    <citation type="journal article" date="2006" name="PLoS Genet.">
        <title>The complete genome sequence and comparative genome analysis of the high pathogenicity Yersinia enterocolitica strain 8081.</title>
        <authorList>
            <person name="Thomson N.R."/>
            <person name="Howard S."/>
            <person name="Wren B.W."/>
            <person name="Holden M.T.G."/>
            <person name="Crossman L."/>
            <person name="Challis G.L."/>
            <person name="Churcher C."/>
            <person name="Mungall K."/>
            <person name="Brooks K."/>
            <person name="Chillingworth T."/>
            <person name="Feltwell T."/>
            <person name="Abdellah Z."/>
            <person name="Hauser H."/>
            <person name="Jagels K."/>
            <person name="Maddison M."/>
            <person name="Moule S."/>
            <person name="Sanders M."/>
            <person name="Whitehead S."/>
            <person name="Quail M.A."/>
            <person name="Dougan G."/>
            <person name="Parkhill J."/>
            <person name="Prentice M.B."/>
        </authorList>
    </citation>
    <scope>NUCLEOTIDE SEQUENCE [LARGE SCALE GENOMIC DNA]</scope>
    <source>
        <strain>NCTC 13174 / 8081</strain>
    </source>
</reference>
<gene>
    <name evidence="1" type="primary">azoR</name>
    <name type="ordered locus">YE2092</name>
</gene>
<accession>A1JN84</accession>